<dbReference type="EMBL" id="AY059511">
    <property type="protein sequence ID" value="AAL31417.1"/>
    <property type="molecule type" value="Genomic_RNA"/>
</dbReference>
<dbReference type="SMR" id="Q8QPI1"/>
<dbReference type="Proteomes" id="UP000008285">
    <property type="component" value="Genome"/>
</dbReference>
<dbReference type="GO" id="GO:0042025">
    <property type="term" value="C:host cell nucleus"/>
    <property type="evidence" value="ECO:0007669"/>
    <property type="project" value="UniProtKB-SubCell"/>
</dbReference>
<dbReference type="GO" id="GO:0016020">
    <property type="term" value="C:membrane"/>
    <property type="evidence" value="ECO:0007669"/>
    <property type="project" value="UniProtKB-KW"/>
</dbReference>
<dbReference type="GO" id="GO:0055036">
    <property type="term" value="C:virion membrane"/>
    <property type="evidence" value="ECO:0007669"/>
    <property type="project" value="UniProtKB-SubCell"/>
</dbReference>
<dbReference type="GO" id="GO:0003723">
    <property type="term" value="F:RNA binding"/>
    <property type="evidence" value="ECO:0007669"/>
    <property type="project" value="UniProtKB-UniRule"/>
</dbReference>
<dbReference type="GO" id="GO:0039660">
    <property type="term" value="F:structural constituent of virion"/>
    <property type="evidence" value="ECO:0007669"/>
    <property type="project" value="UniProtKB-UniRule"/>
</dbReference>
<dbReference type="GO" id="GO:0046761">
    <property type="term" value="P:viral budding from plasma membrane"/>
    <property type="evidence" value="ECO:0007669"/>
    <property type="project" value="UniProtKB-UniRule"/>
</dbReference>
<dbReference type="FunFam" id="1.10.10.180:FF:000001">
    <property type="entry name" value="Matrix protein 1"/>
    <property type="match status" value="1"/>
</dbReference>
<dbReference type="FunFam" id="1.20.91.10:FF:000001">
    <property type="entry name" value="Matrix protein 1"/>
    <property type="match status" value="1"/>
</dbReference>
<dbReference type="Gene3D" id="1.10.10.180">
    <property type="match status" value="1"/>
</dbReference>
<dbReference type="Gene3D" id="1.20.91.10">
    <property type="match status" value="1"/>
</dbReference>
<dbReference type="HAMAP" id="MF_04068">
    <property type="entry name" value="INFV_M1"/>
    <property type="match status" value="1"/>
</dbReference>
<dbReference type="InterPro" id="IPR036039">
    <property type="entry name" value="Flu_matrix_M1"/>
</dbReference>
<dbReference type="InterPro" id="IPR013188">
    <property type="entry name" value="Flu_matrix_M1_C"/>
</dbReference>
<dbReference type="InterPro" id="IPR001561">
    <property type="entry name" value="Flu_matrix_M1_N"/>
</dbReference>
<dbReference type="InterPro" id="IPR015423">
    <property type="entry name" value="Flu_matrix_M1_N_sub1"/>
</dbReference>
<dbReference type="InterPro" id="IPR015799">
    <property type="entry name" value="Flu_matrix_M1_N_sub2"/>
</dbReference>
<dbReference type="InterPro" id="IPR037533">
    <property type="entry name" value="INFV_M1"/>
</dbReference>
<dbReference type="Pfam" id="PF00598">
    <property type="entry name" value="Flu_M1"/>
    <property type="match status" value="1"/>
</dbReference>
<dbReference type="Pfam" id="PF08289">
    <property type="entry name" value="Flu_M1_C"/>
    <property type="match status" value="1"/>
</dbReference>
<dbReference type="SMART" id="SM00759">
    <property type="entry name" value="Flu_M1_C"/>
    <property type="match status" value="1"/>
</dbReference>
<dbReference type="SUPFAM" id="SSF48145">
    <property type="entry name" value="Influenza virus matrix protein M1"/>
    <property type="match status" value="1"/>
</dbReference>
<evidence type="ECO:0000255" key="1">
    <source>
        <dbReference type="HAMAP-Rule" id="MF_04068"/>
    </source>
</evidence>
<accession>Q8QPI1</accession>
<name>M1_I00A0</name>
<sequence length="252" mass="27949">MSLLTEVETYVLSIIPSGPLKAEIAQRLEDVFAGKNTDLEALMEWLKTRPILSPLTKGILGFVFTLTVPSERGLQRRRFVQNALNGNGDPNNMDRAVKLYKKLKREITFHGAKEVALSYSTGALASCMGLIYNRMGTVTTEVAFGLVCATCEQIADSQHRSHRQMATTTNPLIRHENRMVLASTTAKAMEQMAGSSEQAAEAMEVANQARQMVQAMRTIGTHPNSSAGLRDNLLENLQAYQKRMGVQMQRFK</sequence>
<proteinExistence type="inferred from homology"/>
<keyword id="KW-0025">Alternative splicing</keyword>
<keyword id="KW-1048">Host nucleus</keyword>
<keyword id="KW-0472">Membrane</keyword>
<keyword id="KW-0694">RNA-binding</keyword>
<keyword id="KW-0468">Viral matrix protein</keyword>
<keyword id="KW-0946">Virion</keyword>
<reference key="1">
    <citation type="journal article" date="2002" name="Virology">
        <title>H5N1 influenza viruses isolated from geese in Southeastern China: evidence for genetic reassortment and interspecies transmission to ducks.</title>
        <authorList>
            <person name="Guan Y."/>
            <person name="Peiris M."/>
            <person name="Kong K.F."/>
            <person name="Dyrting K.C."/>
            <person name="Ellis T.M."/>
            <person name="Sit T."/>
            <person name="Zhang L.J."/>
            <person name="Shortridge K.F."/>
        </authorList>
    </citation>
    <scope>NUCLEOTIDE SEQUENCE [GENOMIC RNA]</scope>
</reference>
<protein>
    <recommendedName>
        <fullName evidence="1">Matrix protein 1</fullName>
        <shortName evidence="1">M1</shortName>
    </recommendedName>
</protein>
<comment type="function">
    <text evidence="1">Plays critical roles in virus replication, from virus entry and uncoating to assembly and budding of the virus particle. M1 binding to ribonucleocapsids (RNPs) in nucleus seems to inhibit viral transcription. Interaction of viral NEP with M1-RNP is thought to promote nuclear export of the complex, which is targeted to the virion assembly site at the apical plasma membrane in polarized epithelial cells. Interactions with NA and HA may bring M1, a non-raft-associated protein, into lipid rafts. Forms a continuous shell on the inner side of the lipid bilayer in virion, where it binds the RNP. During virus entry into cell, the M2 ion channel acidifies the internal virion core, inducing M1 dissociation from the RNP. M1-free RNPs are transported to the nucleus, where viral transcription and replication can take place.</text>
</comment>
<comment type="function">
    <text evidence="1">Determines the virion's shape: spherical or filamentous. Clinical isolates of influenza are characterized by the presence of significant proportion of filamentous virions, whereas after multiple passage on eggs or cell culture, virions have only spherical morphology. Filamentous virions are thought to be important to infect neighboring cells, and spherical virions more suited to spread through aerosol between hosts organisms.</text>
</comment>
<comment type="subunit">
    <text evidence="1">Homodimer and homomultimer. Interacts with NEP. Binds ribonucleocapsid by both interacting with genomic RNA and NP protein. May interact with HA and NA. Cannot bind NP without genomic RNA.</text>
</comment>
<comment type="subcellular location">
    <subcellularLocation>
        <location evidence="1">Virion membrane</location>
        <topology evidence="1">Peripheral membrane protein</topology>
        <orientation evidence="1">Cytoplasmic side</orientation>
    </subcellularLocation>
    <subcellularLocation>
        <location evidence="1">Host nucleus</location>
    </subcellularLocation>
</comment>
<comment type="alternative products">
    <event type="alternative splicing"/>
    <isoform>
        <id>Q8QPI1-1</id>
        <name>M1</name>
        <sequence type="displayed"/>
    </isoform>
    <isoform>
        <id>P0C575-1</id>
        <name>M2</name>
        <sequence type="external"/>
    </isoform>
    <text>Only the first 9 residues are shared by the 2 isoforms.</text>
</comment>
<comment type="miscellaneous">
    <text evidence="1">Most abundant protein in virion. When expressed alone can form virus-like particles in transfected cells.</text>
</comment>
<comment type="similarity">
    <text evidence="1">Belongs to the influenza viruses Matrix protein M1 family.</text>
</comment>
<gene>
    <name evidence="1" type="primary">M</name>
</gene>
<feature type="chain" id="PRO_0000311606" description="Matrix protein 1">
    <location>
        <begin position="1"/>
        <end position="252"/>
    </location>
</feature>
<feature type="region of interest" description="Membrane-binding" evidence="1">
    <location>
        <begin position="1"/>
        <end position="164"/>
    </location>
</feature>
<feature type="region of interest" description="RNP-binding" evidence="1">
    <location>
        <begin position="165"/>
        <end position="252"/>
    </location>
</feature>
<feature type="short sequence motif" description="Nuclear localization signal" evidence="1">
    <location>
        <begin position="101"/>
        <end position="105"/>
    </location>
</feature>
<organism>
    <name type="scientific">Influenza A virus (strain A/Duck/Hong Kong/2986.1/2000 H5N1 genotype C)</name>
    <dbReference type="NCBI Taxonomy" id="176674"/>
    <lineage>
        <taxon>Viruses</taxon>
        <taxon>Riboviria</taxon>
        <taxon>Orthornavirae</taxon>
        <taxon>Negarnaviricota</taxon>
        <taxon>Polyploviricotina</taxon>
        <taxon>Insthoviricetes</taxon>
        <taxon>Articulavirales</taxon>
        <taxon>Orthomyxoviridae</taxon>
        <taxon>Alphainfluenzavirus</taxon>
        <taxon>Alphainfluenzavirus influenzae</taxon>
        <taxon>Influenza A virus</taxon>
    </lineage>
</organism>
<organismHost>
    <name type="scientific">Aves</name>
    <dbReference type="NCBI Taxonomy" id="8782"/>
</organismHost>
<organismHost>
    <name type="scientific">Felis catus</name>
    <name type="common">Cat</name>
    <name type="synonym">Felis silvestris catus</name>
    <dbReference type="NCBI Taxonomy" id="9685"/>
</organismHost>
<organismHost>
    <name type="scientific">Homo sapiens</name>
    <name type="common">Human</name>
    <dbReference type="NCBI Taxonomy" id="9606"/>
</organismHost>
<organismHost>
    <name type="scientific">Panthera pardus</name>
    <name type="common">Leopard</name>
    <name type="synonym">Felis pardus</name>
    <dbReference type="NCBI Taxonomy" id="9691"/>
</organismHost>
<organismHost>
    <name type="scientific">Panthera tigris</name>
    <name type="common">Tiger</name>
    <dbReference type="NCBI Taxonomy" id="9694"/>
</organismHost>
<organismHost>
    <name type="scientific">Sus scrofa</name>
    <name type="common">Pig</name>
    <dbReference type="NCBI Taxonomy" id="9823"/>
</organismHost>